<proteinExistence type="inferred from homology"/>
<accession>Q4WQI1</accession>
<keyword id="KW-0175">Coiled coil</keyword>
<keyword id="KW-0378">Hydrolase</keyword>
<keyword id="KW-0645">Protease</keyword>
<keyword id="KW-1185">Reference proteome</keyword>
<keyword id="KW-0788">Thiol protease</keyword>
<keyword id="KW-0833">Ubl conjugation pathway</keyword>
<organism>
    <name type="scientific">Aspergillus fumigatus (strain ATCC MYA-4609 / CBS 101355 / FGSC A1100 / Af293)</name>
    <name type="common">Neosartorya fumigata</name>
    <dbReference type="NCBI Taxonomy" id="330879"/>
    <lineage>
        <taxon>Eukaryota</taxon>
        <taxon>Fungi</taxon>
        <taxon>Dikarya</taxon>
        <taxon>Ascomycota</taxon>
        <taxon>Pezizomycotina</taxon>
        <taxon>Eurotiomycetes</taxon>
        <taxon>Eurotiomycetidae</taxon>
        <taxon>Eurotiales</taxon>
        <taxon>Aspergillaceae</taxon>
        <taxon>Aspergillus</taxon>
        <taxon>Aspergillus subgen. Fumigati</taxon>
    </lineage>
</organism>
<gene>
    <name type="primary">creB</name>
    <name type="ORF">AFUA_4G12910</name>
</gene>
<feature type="chain" id="PRO_0000395680" description="Probable ubiquitin carboxyl-terminal hydrolase creB">
    <location>
        <begin position="1"/>
        <end position="775"/>
    </location>
</feature>
<feature type="domain" description="USP">
    <location>
        <begin position="55"/>
        <end position="468"/>
    </location>
</feature>
<feature type="region of interest" description="Disordered" evidence="5">
    <location>
        <begin position="1"/>
        <end position="45"/>
    </location>
</feature>
<feature type="region of interest" description="Disordered" evidence="5">
    <location>
        <begin position="113"/>
        <end position="146"/>
    </location>
</feature>
<feature type="region of interest" description="Disordered" evidence="5">
    <location>
        <begin position="238"/>
        <end position="269"/>
    </location>
</feature>
<feature type="region of interest" description="Disordered" evidence="5">
    <location>
        <begin position="496"/>
        <end position="775"/>
    </location>
</feature>
<feature type="coiled-coil region" evidence="2">
    <location>
        <begin position="586"/>
        <end position="653"/>
    </location>
</feature>
<feature type="compositionally biased region" description="Basic and acidic residues" evidence="5">
    <location>
        <begin position="36"/>
        <end position="45"/>
    </location>
</feature>
<feature type="compositionally biased region" description="Polar residues" evidence="5">
    <location>
        <begin position="256"/>
        <end position="269"/>
    </location>
</feature>
<feature type="compositionally biased region" description="Low complexity" evidence="5">
    <location>
        <begin position="546"/>
        <end position="566"/>
    </location>
</feature>
<feature type="compositionally biased region" description="Low complexity" evidence="5">
    <location>
        <begin position="576"/>
        <end position="585"/>
    </location>
</feature>
<feature type="compositionally biased region" description="Basic and acidic residues" evidence="5">
    <location>
        <begin position="589"/>
        <end position="662"/>
    </location>
</feature>
<feature type="compositionally biased region" description="Basic residues" evidence="5">
    <location>
        <begin position="668"/>
        <end position="679"/>
    </location>
</feature>
<feature type="compositionally biased region" description="Low complexity" evidence="5">
    <location>
        <begin position="705"/>
        <end position="725"/>
    </location>
</feature>
<feature type="compositionally biased region" description="Basic and acidic residues" evidence="5">
    <location>
        <begin position="739"/>
        <end position="757"/>
    </location>
</feature>
<feature type="compositionally biased region" description="Basic residues" evidence="5">
    <location>
        <begin position="758"/>
        <end position="775"/>
    </location>
</feature>
<feature type="active site" description="Nucleophile" evidence="3 4">
    <location>
        <position position="64"/>
    </location>
</feature>
<feature type="active site" description="Proton acceptor" evidence="3 4">
    <location>
        <position position="419"/>
    </location>
</feature>
<name>CREB_ASPFU</name>
<sequence>MGSFLRSFRHNGGSTAPSVGAVPAKKEPQPPPMTPLEKRLLDMGPIREDGSDKFYGMENYGNTCYCNSILQCLYYSVPFREAVINYPTRTPIESLEAALAKSLRYPNPNAQLEAEAQAEKQKAANAQRPGMPPNPQQKPEDKDSPEYKKKMALQTLPLLETQNNASSYGMSESLFTSLKDIFESVVGSQSRIGIIRPQQFLEVLRRDHEMFRTAMHQDAHEFLNLLLNEVVANVEAEASKQPPIEKSLPAPETADSVDQSSSTGSKTPNTTRWVHELFEGLLTSETQCLTCEKVSQRDEVFLDLSVDLEQHSSVTSCLRKFSAEEMLCERNKFHCDNCGGLQEAEKRMKIKRLPRILALHLKRFKYTEDLQRLQKLFHRVVYPYHLRLFNTTDDAEDPDRLYELYAVVVHIGGGPYHGHYVAIIKTEDRGWLLFDDEMVEPVDKNYVKNFFGDKPGLACAYVLFYQETTLEAVLKEQEQENMDSNLAATDANDTILKQNGFPQSPLAHVHSASQIPSHEDNLRPNGLRRAPTAPQLSTHHEHGDPESAPFSPLSPLSPLSPLSPLSQTPPVPPVPERVTTVATPPKNDALAKKERAREEKERKAAEKEREKAEKLRRKEQEARMKENQRREEAELKAALEMSKASKAEEDRRLSHENGKEKQGGSLSRLKRGSKSLSHRLGKDKETRSVSSDLPPVPIPEHSTLSQTGPTSEQQQQQQQQQSPPNHDQPPNSPQLGKPTIREDEQVNHKDSKHERTGHGKWRSFSLRKKSFSILS</sequence>
<reference key="1">
    <citation type="journal article" date="2005" name="Nature">
        <title>Genomic sequence of the pathogenic and allergenic filamentous fungus Aspergillus fumigatus.</title>
        <authorList>
            <person name="Nierman W.C."/>
            <person name="Pain A."/>
            <person name="Anderson M.J."/>
            <person name="Wortman J.R."/>
            <person name="Kim H.S."/>
            <person name="Arroyo J."/>
            <person name="Berriman M."/>
            <person name="Abe K."/>
            <person name="Archer D.B."/>
            <person name="Bermejo C."/>
            <person name="Bennett J.W."/>
            <person name="Bowyer P."/>
            <person name="Chen D."/>
            <person name="Collins M."/>
            <person name="Coulsen R."/>
            <person name="Davies R."/>
            <person name="Dyer P.S."/>
            <person name="Farman M.L."/>
            <person name="Fedorova N."/>
            <person name="Fedorova N.D."/>
            <person name="Feldblyum T.V."/>
            <person name="Fischer R."/>
            <person name="Fosker N."/>
            <person name="Fraser A."/>
            <person name="Garcia J.L."/>
            <person name="Garcia M.J."/>
            <person name="Goble A."/>
            <person name="Goldman G.H."/>
            <person name="Gomi K."/>
            <person name="Griffith-Jones S."/>
            <person name="Gwilliam R."/>
            <person name="Haas B.J."/>
            <person name="Haas H."/>
            <person name="Harris D.E."/>
            <person name="Horiuchi H."/>
            <person name="Huang J."/>
            <person name="Humphray S."/>
            <person name="Jimenez J."/>
            <person name="Keller N."/>
            <person name="Khouri H."/>
            <person name="Kitamoto K."/>
            <person name="Kobayashi T."/>
            <person name="Konzack S."/>
            <person name="Kulkarni R."/>
            <person name="Kumagai T."/>
            <person name="Lafton A."/>
            <person name="Latge J.-P."/>
            <person name="Li W."/>
            <person name="Lord A."/>
            <person name="Lu C."/>
            <person name="Majoros W.H."/>
            <person name="May G.S."/>
            <person name="Miller B.L."/>
            <person name="Mohamoud Y."/>
            <person name="Molina M."/>
            <person name="Monod M."/>
            <person name="Mouyna I."/>
            <person name="Mulligan S."/>
            <person name="Murphy L.D."/>
            <person name="O'Neil S."/>
            <person name="Paulsen I."/>
            <person name="Penalva M.A."/>
            <person name="Pertea M."/>
            <person name="Price C."/>
            <person name="Pritchard B.L."/>
            <person name="Quail M.A."/>
            <person name="Rabbinowitsch E."/>
            <person name="Rawlins N."/>
            <person name="Rajandream M.A."/>
            <person name="Reichard U."/>
            <person name="Renauld H."/>
            <person name="Robson G.D."/>
            <person name="Rodriguez de Cordoba S."/>
            <person name="Rodriguez-Pena J.M."/>
            <person name="Ronning C.M."/>
            <person name="Rutter S."/>
            <person name="Salzberg S.L."/>
            <person name="Sanchez M."/>
            <person name="Sanchez-Ferrero J.C."/>
            <person name="Saunders D."/>
            <person name="Seeger K."/>
            <person name="Squares R."/>
            <person name="Squares S."/>
            <person name="Takeuchi M."/>
            <person name="Tekaia F."/>
            <person name="Turner G."/>
            <person name="Vazquez de Aldana C.R."/>
            <person name="Weidman J."/>
            <person name="White O."/>
            <person name="Woodward J.R."/>
            <person name="Yu J.-H."/>
            <person name="Fraser C.M."/>
            <person name="Galagan J.E."/>
            <person name="Asai K."/>
            <person name="Machida M."/>
            <person name="Hall N."/>
            <person name="Barrell B.G."/>
            <person name="Denning D.W."/>
        </authorList>
    </citation>
    <scope>NUCLEOTIDE SEQUENCE [LARGE SCALE GENOMIC DNA]</scope>
    <source>
        <strain>ATCC MYA-4609 / CBS 101355 / FGSC A1100 / Af293</strain>
    </source>
</reference>
<comment type="function">
    <text evidence="1">Ubiquitin thioesterase component of the regulatory network controlling carbon source utilization through ubiquitination and deubiquitination involving creA, creB, creC, creD and acrB. Deubiquitinates the creA catabolic repressor and the quinate permease qutD. Also plays a role in response to carbon starvation and the control of extracellular proteases activity (By similarity).</text>
</comment>
<comment type="catalytic activity">
    <reaction>
        <text>Thiol-dependent hydrolysis of ester, thioester, amide, peptide and isopeptide bonds formed by the C-terminal Gly of ubiquitin (a 76-residue protein attached to proteins as an intracellular targeting signal).</text>
        <dbReference type="EC" id="3.4.19.12"/>
    </reaction>
</comment>
<comment type="subunit">
    <text evidence="1">Interacts with creA, creC and qutD.</text>
</comment>
<comment type="similarity">
    <text evidence="6">Belongs to the peptidase C19 family.</text>
</comment>
<comment type="sequence caution" evidence="6">
    <conflict type="erroneous gene model prediction">
        <sequence resource="EMBL-CDS" id="EAL89503"/>
    </conflict>
</comment>
<evidence type="ECO:0000250" key="1"/>
<evidence type="ECO:0000255" key="2"/>
<evidence type="ECO:0000255" key="3">
    <source>
        <dbReference type="PROSITE-ProRule" id="PRU10092"/>
    </source>
</evidence>
<evidence type="ECO:0000255" key="4">
    <source>
        <dbReference type="PROSITE-ProRule" id="PRU10093"/>
    </source>
</evidence>
<evidence type="ECO:0000256" key="5">
    <source>
        <dbReference type="SAM" id="MobiDB-lite"/>
    </source>
</evidence>
<evidence type="ECO:0000305" key="6"/>
<protein>
    <recommendedName>
        <fullName>Probable ubiquitin carboxyl-terminal hydrolase creB</fullName>
        <ecNumber>3.4.19.12</ecNumber>
    </recommendedName>
    <alternativeName>
        <fullName>Carbon catabolite repression protein B</fullName>
    </alternativeName>
    <alternativeName>
        <fullName>Deubiquitinating enzyme creB</fullName>
    </alternativeName>
    <alternativeName>
        <fullName>Ubiquitin thioesterase creB</fullName>
    </alternativeName>
    <alternativeName>
        <fullName>Ubiquitin-hydrolyzing enzyme creB</fullName>
    </alternativeName>
    <alternativeName>
        <fullName>Ubiquitin-specific-processing protease creB</fullName>
    </alternativeName>
</protein>
<dbReference type="EC" id="3.4.19.12"/>
<dbReference type="EMBL" id="AAHF01000005">
    <property type="protein sequence ID" value="EAL89503.2"/>
    <property type="status" value="ALT_SEQ"/>
    <property type="molecule type" value="Genomic_DNA"/>
</dbReference>
<dbReference type="RefSeq" id="XP_751541.2">
    <property type="nucleotide sequence ID" value="XM_746448.2"/>
</dbReference>
<dbReference type="SMR" id="Q4WQI1"/>
<dbReference type="FunCoup" id="Q4WQI1">
    <property type="interactions" value="405"/>
</dbReference>
<dbReference type="STRING" id="330879.Q4WQI1"/>
<dbReference type="GeneID" id="3509101"/>
<dbReference type="KEGG" id="afm:AFUA_4G12910"/>
<dbReference type="VEuPathDB" id="FungiDB:Afu4g12910"/>
<dbReference type="eggNOG" id="KOG1864">
    <property type="taxonomic scope" value="Eukaryota"/>
</dbReference>
<dbReference type="HOGENOM" id="CLU_008279_0_2_1"/>
<dbReference type="InParanoid" id="Q4WQI1"/>
<dbReference type="OrthoDB" id="27652at2759"/>
<dbReference type="Proteomes" id="UP000002530">
    <property type="component" value="Chromosome 4"/>
</dbReference>
<dbReference type="GO" id="GO:0005829">
    <property type="term" value="C:cytosol"/>
    <property type="evidence" value="ECO:0000318"/>
    <property type="project" value="GO_Central"/>
</dbReference>
<dbReference type="GO" id="GO:0005634">
    <property type="term" value="C:nucleus"/>
    <property type="evidence" value="ECO:0000318"/>
    <property type="project" value="GO_Central"/>
</dbReference>
<dbReference type="GO" id="GO:0004843">
    <property type="term" value="F:cysteine-type deubiquitinase activity"/>
    <property type="evidence" value="ECO:0000250"/>
    <property type="project" value="UniProtKB"/>
</dbReference>
<dbReference type="GO" id="GO:0045013">
    <property type="term" value="P:carbon catabolite repression of transcription"/>
    <property type="evidence" value="ECO:0000250"/>
    <property type="project" value="UniProtKB"/>
</dbReference>
<dbReference type="GO" id="GO:0016579">
    <property type="term" value="P:protein deubiquitination"/>
    <property type="evidence" value="ECO:0007669"/>
    <property type="project" value="InterPro"/>
</dbReference>
<dbReference type="GO" id="GO:0031647">
    <property type="term" value="P:regulation of protein stability"/>
    <property type="evidence" value="ECO:0000318"/>
    <property type="project" value="GO_Central"/>
</dbReference>
<dbReference type="GO" id="GO:0006511">
    <property type="term" value="P:ubiquitin-dependent protein catabolic process"/>
    <property type="evidence" value="ECO:0000250"/>
    <property type="project" value="UniProtKB"/>
</dbReference>
<dbReference type="CDD" id="cd02663">
    <property type="entry name" value="Peptidase_C19G"/>
    <property type="match status" value="1"/>
</dbReference>
<dbReference type="FunFam" id="3.90.70.10:FF:000075">
    <property type="entry name" value="Ubiquitin carboxyl-terminal hydrolase creB"/>
    <property type="match status" value="1"/>
</dbReference>
<dbReference type="Gene3D" id="3.90.70.10">
    <property type="entry name" value="Cysteine proteinases"/>
    <property type="match status" value="1"/>
</dbReference>
<dbReference type="InterPro" id="IPR038765">
    <property type="entry name" value="Papain-like_cys_pep_sf"/>
</dbReference>
<dbReference type="InterPro" id="IPR050164">
    <property type="entry name" value="Peptidase_C19"/>
</dbReference>
<dbReference type="InterPro" id="IPR001394">
    <property type="entry name" value="Peptidase_C19_UCH"/>
</dbReference>
<dbReference type="InterPro" id="IPR018200">
    <property type="entry name" value="USP_CS"/>
</dbReference>
<dbReference type="InterPro" id="IPR028889">
    <property type="entry name" value="USP_dom"/>
</dbReference>
<dbReference type="PANTHER" id="PTHR24006:SF733">
    <property type="entry name" value="RE52890P"/>
    <property type="match status" value="1"/>
</dbReference>
<dbReference type="PANTHER" id="PTHR24006">
    <property type="entry name" value="UBIQUITIN CARBOXYL-TERMINAL HYDROLASE"/>
    <property type="match status" value="1"/>
</dbReference>
<dbReference type="Pfam" id="PF00443">
    <property type="entry name" value="UCH"/>
    <property type="match status" value="1"/>
</dbReference>
<dbReference type="SUPFAM" id="SSF54001">
    <property type="entry name" value="Cysteine proteinases"/>
    <property type="match status" value="1"/>
</dbReference>
<dbReference type="PROSITE" id="PS00972">
    <property type="entry name" value="USP_1"/>
    <property type="match status" value="1"/>
</dbReference>
<dbReference type="PROSITE" id="PS00973">
    <property type="entry name" value="USP_2"/>
    <property type="match status" value="1"/>
</dbReference>
<dbReference type="PROSITE" id="PS50235">
    <property type="entry name" value="USP_3"/>
    <property type="match status" value="1"/>
</dbReference>